<organism>
    <name type="scientific">Lactobacillus delbrueckii subsp. bulgaricus (strain ATCC 11842 / DSM 20081 / BCRC 10696 / JCM 1002 / NBRC 13953 / NCIMB 11778 / NCTC 12712 / WDCM 00102 / Lb 14)</name>
    <dbReference type="NCBI Taxonomy" id="390333"/>
    <lineage>
        <taxon>Bacteria</taxon>
        <taxon>Bacillati</taxon>
        <taxon>Bacillota</taxon>
        <taxon>Bacilli</taxon>
        <taxon>Lactobacillales</taxon>
        <taxon>Lactobacillaceae</taxon>
        <taxon>Lactobacillus</taxon>
    </lineage>
</organism>
<dbReference type="EMBL" id="CR954253">
    <property type="protein sequence ID" value="CAI97246.1"/>
    <property type="molecule type" value="Genomic_DNA"/>
</dbReference>
<dbReference type="RefSeq" id="WP_002878187.1">
    <property type="nucleotide sequence ID" value="NZ_JQAV01000001.1"/>
</dbReference>
<dbReference type="SMR" id="Q1GBK3"/>
<dbReference type="STRING" id="390333.Ldb0411"/>
<dbReference type="GeneID" id="69668441"/>
<dbReference type="KEGG" id="ldb:Ldb0411"/>
<dbReference type="PATRIC" id="fig|390333.13.peg.380"/>
<dbReference type="eggNOG" id="COG0097">
    <property type="taxonomic scope" value="Bacteria"/>
</dbReference>
<dbReference type="HOGENOM" id="CLU_065464_1_2_9"/>
<dbReference type="BioCyc" id="LDEL390333:LDB_RS01745-MONOMER"/>
<dbReference type="Proteomes" id="UP000001259">
    <property type="component" value="Chromosome"/>
</dbReference>
<dbReference type="GO" id="GO:0022625">
    <property type="term" value="C:cytosolic large ribosomal subunit"/>
    <property type="evidence" value="ECO:0007669"/>
    <property type="project" value="TreeGrafter"/>
</dbReference>
<dbReference type="GO" id="GO:0019843">
    <property type="term" value="F:rRNA binding"/>
    <property type="evidence" value="ECO:0007669"/>
    <property type="project" value="UniProtKB-UniRule"/>
</dbReference>
<dbReference type="GO" id="GO:0003735">
    <property type="term" value="F:structural constituent of ribosome"/>
    <property type="evidence" value="ECO:0007669"/>
    <property type="project" value="InterPro"/>
</dbReference>
<dbReference type="GO" id="GO:0002181">
    <property type="term" value="P:cytoplasmic translation"/>
    <property type="evidence" value="ECO:0007669"/>
    <property type="project" value="TreeGrafter"/>
</dbReference>
<dbReference type="FunFam" id="3.90.930.12:FF:000001">
    <property type="entry name" value="50S ribosomal protein L6"/>
    <property type="match status" value="1"/>
</dbReference>
<dbReference type="FunFam" id="3.90.930.12:FF:000002">
    <property type="entry name" value="50S ribosomal protein L6"/>
    <property type="match status" value="1"/>
</dbReference>
<dbReference type="Gene3D" id="3.90.930.12">
    <property type="entry name" value="Ribosomal protein L6, alpha-beta domain"/>
    <property type="match status" value="2"/>
</dbReference>
<dbReference type="HAMAP" id="MF_01365_B">
    <property type="entry name" value="Ribosomal_uL6_B"/>
    <property type="match status" value="1"/>
</dbReference>
<dbReference type="InterPro" id="IPR000702">
    <property type="entry name" value="Ribosomal_uL6-like"/>
</dbReference>
<dbReference type="InterPro" id="IPR036789">
    <property type="entry name" value="Ribosomal_uL6-like_a/b-dom_sf"/>
</dbReference>
<dbReference type="InterPro" id="IPR020040">
    <property type="entry name" value="Ribosomal_uL6_a/b-dom"/>
</dbReference>
<dbReference type="InterPro" id="IPR019906">
    <property type="entry name" value="Ribosomal_uL6_bac-type"/>
</dbReference>
<dbReference type="InterPro" id="IPR002358">
    <property type="entry name" value="Ribosomal_uL6_CS"/>
</dbReference>
<dbReference type="NCBIfam" id="TIGR03654">
    <property type="entry name" value="L6_bact"/>
    <property type="match status" value="1"/>
</dbReference>
<dbReference type="PANTHER" id="PTHR11655">
    <property type="entry name" value="60S/50S RIBOSOMAL PROTEIN L6/L9"/>
    <property type="match status" value="1"/>
</dbReference>
<dbReference type="PANTHER" id="PTHR11655:SF14">
    <property type="entry name" value="LARGE RIBOSOMAL SUBUNIT PROTEIN UL6M"/>
    <property type="match status" value="1"/>
</dbReference>
<dbReference type="Pfam" id="PF00347">
    <property type="entry name" value="Ribosomal_L6"/>
    <property type="match status" value="2"/>
</dbReference>
<dbReference type="PIRSF" id="PIRSF002162">
    <property type="entry name" value="Ribosomal_L6"/>
    <property type="match status" value="1"/>
</dbReference>
<dbReference type="PRINTS" id="PR00059">
    <property type="entry name" value="RIBOSOMALL6"/>
</dbReference>
<dbReference type="SUPFAM" id="SSF56053">
    <property type="entry name" value="Ribosomal protein L6"/>
    <property type="match status" value="2"/>
</dbReference>
<dbReference type="PROSITE" id="PS00525">
    <property type="entry name" value="RIBOSOMAL_L6_1"/>
    <property type="match status" value="1"/>
</dbReference>
<reference key="1">
    <citation type="journal article" date="2006" name="Proc. Natl. Acad. Sci. U.S.A.">
        <title>The complete genome sequence of Lactobacillus bulgaricus reveals extensive and ongoing reductive evolution.</title>
        <authorList>
            <person name="van de Guchte M."/>
            <person name="Penaud S."/>
            <person name="Grimaldi C."/>
            <person name="Barbe V."/>
            <person name="Bryson K."/>
            <person name="Nicolas P."/>
            <person name="Robert C."/>
            <person name="Oztas S."/>
            <person name="Mangenot S."/>
            <person name="Couloux A."/>
            <person name="Loux V."/>
            <person name="Dervyn R."/>
            <person name="Bossy R."/>
            <person name="Bolotin A."/>
            <person name="Batto J.-M."/>
            <person name="Walunas T."/>
            <person name="Gibrat J.-F."/>
            <person name="Bessieres P."/>
            <person name="Weissenbach J."/>
            <person name="Ehrlich S.D."/>
            <person name="Maguin E."/>
        </authorList>
    </citation>
    <scope>NUCLEOTIDE SEQUENCE [LARGE SCALE GENOMIC DNA]</scope>
    <source>
        <strain>ATCC 11842 / DSM 20081 / BCRC 10696 / JCM 1002 / NBRC 13953 / NCIMB 11778 / NCTC 12712 / WDCM 00102 / Lb 14</strain>
    </source>
</reference>
<proteinExistence type="inferred from homology"/>
<sequence length="176" mass="19273">MSRIGLKVINVPESVTVTKNGNEITVKGPKGELTREFDPRIKFEQEDGVIRFSRSNENDKAIHGTMRANLANMIEGVVNGYKKELKLIGVGYRAVAKNNVLTLNVGYSHPVEMKAPEGVTVTTSSATDVTIEGISKQVVGQFAAEIRAVRSPEPYKGKGIRYADEVVRRKEGKTGK</sequence>
<feature type="chain" id="PRO_0000260879" description="Large ribosomal subunit protein uL6">
    <location>
        <begin position="1"/>
        <end position="176"/>
    </location>
</feature>
<keyword id="KW-1185">Reference proteome</keyword>
<keyword id="KW-0687">Ribonucleoprotein</keyword>
<keyword id="KW-0689">Ribosomal protein</keyword>
<keyword id="KW-0694">RNA-binding</keyword>
<keyword id="KW-0699">rRNA-binding</keyword>
<name>RL6_LACDA</name>
<accession>Q1GBK3</accession>
<gene>
    <name evidence="1" type="primary">rplF</name>
    <name type="ordered locus">Ldb0411</name>
</gene>
<evidence type="ECO:0000255" key="1">
    <source>
        <dbReference type="HAMAP-Rule" id="MF_01365"/>
    </source>
</evidence>
<evidence type="ECO:0000305" key="2"/>
<protein>
    <recommendedName>
        <fullName evidence="1">Large ribosomal subunit protein uL6</fullName>
    </recommendedName>
    <alternativeName>
        <fullName evidence="2">50S ribosomal protein L6</fullName>
    </alternativeName>
</protein>
<comment type="function">
    <text evidence="1">This protein binds to the 23S rRNA, and is important in its secondary structure. It is located near the subunit interface in the base of the L7/L12 stalk, and near the tRNA binding site of the peptidyltransferase center.</text>
</comment>
<comment type="subunit">
    <text evidence="1">Part of the 50S ribosomal subunit.</text>
</comment>
<comment type="similarity">
    <text evidence="1">Belongs to the universal ribosomal protein uL6 family.</text>
</comment>